<organismHost>
    <name type="scientific">Acidianus convivator</name>
    <dbReference type="NCBI Taxonomy" id="269667"/>
</organismHost>
<name>Y277_ATV</name>
<accession>Q3V4Q9</accession>
<protein>
    <recommendedName>
        <fullName>Uncharacterized protein ORF277</fullName>
    </recommendedName>
</protein>
<dbReference type="EMBL" id="AJ888457">
    <property type="protein sequence ID" value="CAI59905.1"/>
    <property type="molecule type" value="Genomic_DNA"/>
</dbReference>
<dbReference type="RefSeq" id="YP_319887.1">
    <property type="nucleotide sequence ID" value="NC_007409.1"/>
</dbReference>
<dbReference type="SMR" id="Q3V4Q9"/>
<dbReference type="GeneID" id="4484261"/>
<dbReference type="KEGG" id="vg:4484261"/>
<dbReference type="Proteomes" id="UP000002150">
    <property type="component" value="Genome"/>
</dbReference>
<proteinExistence type="predicted"/>
<evidence type="ECO:0000256" key="1">
    <source>
        <dbReference type="SAM" id="MobiDB-lite"/>
    </source>
</evidence>
<organism>
    <name type="scientific">Acidianus two-tailed virus</name>
    <name type="common">ATV</name>
    <dbReference type="NCBI Taxonomy" id="315953"/>
    <lineage>
        <taxon>Viruses</taxon>
        <taxon>Viruses incertae sedis</taxon>
        <taxon>Bicaudaviridae</taxon>
        <taxon>Bicaudavirus</taxon>
    </lineage>
</organism>
<keyword id="KW-1185">Reference proteome</keyword>
<reference key="1">
    <citation type="journal article" date="2005" name="Nature">
        <title>Virology: independent virus development outside a host.</title>
        <authorList>
            <person name="Haring M."/>
            <person name="Vestergaard G."/>
            <person name="Rachel R."/>
            <person name="Chen L."/>
            <person name="Garrett R.A."/>
            <person name="Prangishvili D."/>
        </authorList>
    </citation>
    <scope>NUCLEOTIDE SEQUENCE [GENOMIC DNA]</scope>
</reference>
<feature type="chain" id="PRO_0000389074" description="Uncharacterized protein ORF277">
    <location>
        <begin position="1"/>
        <end position="277"/>
    </location>
</feature>
<feature type="region of interest" description="Disordered" evidence="1">
    <location>
        <begin position="1"/>
        <end position="20"/>
    </location>
</feature>
<sequence length="277" mass="30850">MVTTSPPPTLTNSVQPHPTTTTTTTLLPVTNLIPIILVSVFIALLLIFLLSRTSKKQPDPYLGVMSAISKHIRKKKAIALVFYIDTTDQRIKIYPVFQKVGNVLIYLNENGETNFSVIDPKTKPLQIKVGNISYPVYFAIAGNTIKYLAKFEDLETGVKYDNISIDDPRLIEILSKITGDVTSTYYITPTKKLTILASPEAIASVTIKRLWSPIENSIITIKEINENLTKLMEISARVLGLRLNTRLTLILMLIAVFLIFMVLIGTGIVHFPPPPTK</sequence>